<dbReference type="EMBL" id="DS027696">
    <property type="protein sequence ID" value="EAW17947.1"/>
    <property type="molecule type" value="Genomic_DNA"/>
</dbReference>
<dbReference type="RefSeq" id="XP_001259844.1">
    <property type="nucleotide sequence ID" value="XM_001259843.1"/>
</dbReference>
<dbReference type="SMR" id="A1DEZ0"/>
<dbReference type="STRING" id="331117.A1DEZ0"/>
<dbReference type="GlyCosmos" id="A1DEZ0">
    <property type="glycosylation" value="1 site, No reported glycans"/>
</dbReference>
<dbReference type="EnsemblFungi" id="EAW17947">
    <property type="protein sequence ID" value="EAW17947"/>
    <property type="gene ID" value="NFIA_078870"/>
</dbReference>
<dbReference type="GeneID" id="4585757"/>
<dbReference type="KEGG" id="nfi:NFIA_078870"/>
<dbReference type="VEuPathDB" id="FungiDB:NFIA_078870"/>
<dbReference type="eggNOG" id="ENOG502QW7A">
    <property type="taxonomic scope" value="Eukaryota"/>
</dbReference>
<dbReference type="HOGENOM" id="CLU_043316_1_0_1"/>
<dbReference type="OMA" id="NIVWIFY"/>
<dbReference type="OrthoDB" id="5983572at2759"/>
<dbReference type="Proteomes" id="UP000006702">
    <property type="component" value="Unassembled WGS sequence"/>
</dbReference>
<dbReference type="GO" id="GO:0005886">
    <property type="term" value="C:plasma membrane"/>
    <property type="evidence" value="ECO:0007669"/>
    <property type="project" value="UniProtKB-SubCell"/>
</dbReference>
<dbReference type="GO" id="GO:0030833">
    <property type="term" value="P:regulation of actin filament polymerization"/>
    <property type="evidence" value="ECO:0007669"/>
    <property type="project" value="TreeGrafter"/>
</dbReference>
<dbReference type="CDD" id="cd11855">
    <property type="entry name" value="SH3_Sho1p"/>
    <property type="match status" value="1"/>
</dbReference>
<dbReference type="FunFam" id="2.30.30.40:FF:000213">
    <property type="entry name" value="High osmolarity signaling protein SHO1"/>
    <property type="match status" value="1"/>
</dbReference>
<dbReference type="Gene3D" id="2.30.30.40">
    <property type="entry name" value="SH3 Domains"/>
    <property type="match status" value="1"/>
</dbReference>
<dbReference type="InterPro" id="IPR036028">
    <property type="entry name" value="SH3-like_dom_sf"/>
</dbReference>
<dbReference type="InterPro" id="IPR001452">
    <property type="entry name" value="SH3_domain"/>
</dbReference>
<dbReference type="InterPro" id="IPR035522">
    <property type="entry name" value="Sho1_SH3"/>
</dbReference>
<dbReference type="PANTHER" id="PTHR15735">
    <property type="entry name" value="FCH AND DOUBLE SH3 DOMAINS PROTEIN"/>
    <property type="match status" value="1"/>
</dbReference>
<dbReference type="PANTHER" id="PTHR15735:SF20">
    <property type="entry name" value="HIGH OSMOLARITY SIGNALING PROTEIN SHO1"/>
    <property type="match status" value="1"/>
</dbReference>
<dbReference type="Pfam" id="PF00018">
    <property type="entry name" value="SH3_1"/>
    <property type="match status" value="1"/>
</dbReference>
<dbReference type="PRINTS" id="PR00452">
    <property type="entry name" value="SH3DOMAIN"/>
</dbReference>
<dbReference type="SMART" id="SM00326">
    <property type="entry name" value="SH3"/>
    <property type="match status" value="1"/>
</dbReference>
<dbReference type="SUPFAM" id="SSF50044">
    <property type="entry name" value="SH3-domain"/>
    <property type="match status" value="1"/>
</dbReference>
<dbReference type="PROSITE" id="PS50002">
    <property type="entry name" value="SH3"/>
    <property type="match status" value="1"/>
</dbReference>
<evidence type="ECO:0000250" key="1"/>
<evidence type="ECO:0000255" key="2"/>
<evidence type="ECO:0000255" key="3">
    <source>
        <dbReference type="PROSITE-ProRule" id="PRU00192"/>
    </source>
</evidence>
<evidence type="ECO:0000256" key="4">
    <source>
        <dbReference type="SAM" id="MobiDB-lite"/>
    </source>
</evidence>
<evidence type="ECO:0000305" key="5"/>
<accession>A1DEZ0</accession>
<name>SHO1_NEOFI</name>
<protein>
    <recommendedName>
        <fullName>High osmolarity signaling protein sho1</fullName>
    </recommendedName>
    <alternativeName>
        <fullName>Osmosensor sho1</fullName>
    </alternativeName>
</protein>
<reference key="1">
    <citation type="journal article" date="2008" name="PLoS Genet.">
        <title>Genomic islands in the pathogenic filamentous fungus Aspergillus fumigatus.</title>
        <authorList>
            <person name="Fedorova N.D."/>
            <person name="Khaldi N."/>
            <person name="Joardar V.S."/>
            <person name="Maiti R."/>
            <person name="Amedeo P."/>
            <person name="Anderson M.J."/>
            <person name="Crabtree J."/>
            <person name="Silva J.C."/>
            <person name="Badger J.H."/>
            <person name="Albarraq A."/>
            <person name="Angiuoli S."/>
            <person name="Bussey H."/>
            <person name="Bowyer P."/>
            <person name="Cotty P.J."/>
            <person name="Dyer P.S."/>
            <person name="Egan A."/>
            <person name="Galens K."/>
            <person name="Fraser-Liggett C.M."/>
            <person name="Haas B.J."/>
            <person name="Inman J.M."/>
            <person name="Kent R."/>
            <person name="Lemieux S."/>
            <person name="Malavazi I."/>
            <person name="Orvis J."/>
            <person name="Roemer T."/>
            <person name="Ronning C.M."/>
            <person name="Sundaram J.P."/>
            <person name="Sutton G."/>
            <person name="Turner G."/>
            <person name="Venter J.C."/>
            <person name="White O.R."/>
            <person name="Whitty B.R."/>
            <person name="Youngman P."/>
            <person name="Wolfe K.H."/>
            <person name="Goldman G.H."/>
            <person name="Wortman J.R."/>
            <person name="Jiang B."/>
            <person name="Denning D.W."/>
            <person name="Nierman W.C."/>
        </authorList>
    </citation>
    <scope>NUCLEOTIDE SEQUENCE [LARGE SCALE GENOMIC DNA]</scope>
    <source>
        <strain>ATCC 1020 / DSM 3700 / CBS 544.65 / FGSC A1164 / JCM 1740 / NRRL 181 / WB 181</strain>
    </source>
</reference>
<organism>
    <name type="scientific">Neosartorya fischeri (strain ATCC 1020 / DSM 3700 / CBS 544.65 / FGSC A1164 / JCM 1740 / NRRL 181 / WB 181)</name>
    <name type="common">Aspergillus fischerianus</name>
    <dbReference type="NCBI Taxonomy" id="331117"/>
    <lineage>
        <taxon>Eukaryota</taxon>
        <taxon>Fungi</taxon>
        <taxon>Dikarya</taxon>
        <taxon>Ascomycota</taxon>
        <taxon>Pezizomycotina</taxon>
        <taxon>Eurotiomycetes</taxon>
        <taxon>Eurotiomycetidae</taxon>
        <taxon>Eurotiales</taxon>
        <taxon>Aspergillaceae</taxon>
        <taxon>Aspergillus</taxon>
        <taxon>Aspergillus subgen. Fumigati</taxon>
    </lineage>
</organism>
<comment type="function">
    <text evidence="1">Plasma membrane osmosensor that activates the high osmolarity glycerol (HOG) MAPK signaling pathway in response to high osmolarity.</text>
</comment>
<comment type="subunit">
    <text evidence="1">Forms homooligomers.</text>
</comment>
<comment type="subcellular location">
    <subcellularLocation>
        <location evidence="1">Cell membrane</location>
        <topology evidence="1">Multi-pass membrane protein</topology>
    </subcellularLocation>
</comment>
<comment type="similarity">
    <text evidence="5">Belongs to the SHO1 family.</text>
</comment>
<sequence length="288" mass="30802">MAKFRASNILGDPFALATVSISILAWLIACIASIISDIKTDYPNYSWWAVAYMFCCIIGVTIVFGSDTGLVYGVAVVGYLSTGLVLTTLAVNTLVYADESSSQAAAAGFILLSMVIVVWIFYFGSSPQATHRGFIDSFALNKESSGAYGNRPMSTAFGPRPDTMSTSAPQMYTSAQLNGFETSSPVSGYPGGAPGSENRSSSQARFGNPSASNVTGNNNGQDEVPQPTEYPYKAKAIYSYDANPEDANEISFSKHEILEVSDVSGRWWQARKSNGETGIAPSNYLILL</sequence>
<feature type="chain" id="PRO_0000410385" description="High osmolarity signaling protein sho1">
    <location>
        <begin position="1"/>
        <end position="288"/>
    </location>
</feature>
<feature type="topological domain" description="Cytoplasmic" evidence="2">
    <location>
        <begin position="1"/>
        <end position="14"/>
    </location>
</feature>
<feature type="transmembrane region" description="Helical" evidence="2">
    <location>
        <begin position="15"/>
        <end position="35"/>
    </location>
</feature>
<feature type="topological domain" description="Extracellular" evidence="2">
    <location>
        <begin position="36"/>
        <end position="44"/>
    </location>
</feature>
<feature type="transmembrane region" description="Helical" evidence="2">
    <location>
        <begin position="45"/>
        <end position="65"/>
    </location>
</feature>
<feature type="topological domain" description="Cytoplasmic" evidence="2">
    <location>
        <begin position="66"/>
        <end position="70"/>
    </location>
</feature>
<feature type="transmembrane region" description="Helical" evidence="2">
    <location>
        <begin position="71"/>
        <end position="91"/>
    </location>
</feature>
<feature type="topological domain" description="Extracellular" evidence="2">
    <location>
        <begin position="92"/>
        <end position="103"/>
    </location>
</feature>
<feature type="transmembrane region" description="Helical" evidence="2">
    <location>
        <begin position="104"/>
        <end position="124"/>
    </location>
</feature>
<feature type="topological domain" description="Cytoplasmic" evidence="2">
    <location>
        <begin position="125"/>
        <end position="288"/>
    </location>
</feature>
<feature type="domain" description="SH3" evidence="3">
    <location>
        <begin position="229"/>
        <end position="288"/>
    </location>
</feature>
<feature type="region of interest" description="Disordered" evidence="4">
    <location>
        <begin position="183"/>
        <end position="227"/>
    </location>
</feature>
<feature type="compositionally biased region" description="Polar residues" evidence="4">
    <location>
        <begin position="197"/>
        <end position="221"/>
    </location>
</feature>
<feature type="glycosylation site" description="N-linked (GlcNAc...) asparagine" evidence="2">
    <location>
        <position position="44"/>
    </location>
</feature>
<keyword id="KW-1003">Cell membrane</keyword>
<keyword id="KW-0325">Glycoprotein</keyword>
<keyword id="KW-0472">Membrane</keyword>
<keyword id="KW-1185">Reference proteome</keyword>
<keyword id="KW-0728">SH3 domain</keyword>
<keyword id="KW-0346">Stress response</keyword>
<keyword id="KW-0812">Transmembrane</keyword>
<keyword id="KW-1133">Transmembrane helix</keyword>
<gene>
    <name type="primary">sho1</name>
    <name type="ORF">NFIA_078870</name>
</gene>
<proteinExistence type="inferred from homology"/>